<feature type="chain" id="PRO_0000136955" description="Nucleoside diphosphate kinase">
    <location>
        <begin position="1"/>
        <end position="140"/>
    </location>
</feature>
<feature type="active site" description="Pros-phosphohistidine intermediate" evidence="1">
    <location>
        <position position="117"/>
    </location>
</feature>
<feature type="binding site" evidence="1">
    <location>
        <position position="11"/>
    </location>
    <ligand>
        <name>ATP</name>
        <dbReference type="ChEBI" id="CHEBI:30616"/>
    </ligand>
</feature>
<feature type="binding site" evidence="1">
    <location>
        <position position="59"/>
    </location>
    <ligand>
        <name>ATP</name>
        <dbReference type="ChEBI" id="CHEBI:30616"/>
    </ligand>
</feature>
<feature type="binding site" evidence="1">
    <location>
        <position position="87"/>
    </location>
    <ligand>
        <name>ATP</name>
        <dbReference type="ChEBI" id="CHEBI:30616"/>
    </ligand>
</feature>
<feature type="binding site" evidence="1">
    <location>
        <position position="93"/>
    </location>
    <ligand>
        <name>ATP</name>
        <dbReference type="ChEBI" id="CHEBI:30616"/>
    </ligand>
</feature>
<feature type="binding site" evidence="1">
    <location>
        <position position="104"/>
    </location>
    <ligand>
        <name>ATP</name>
        <dbReference type="ChEBI" id="CHEBI:30616"/>
    </ligand>
</feature>
<feature type="binding site" evidence="1">
    <location>
        <position position="114"/>
    </location>
    <ligand>
        <name>ATP</name>
        <dbReference type="ChEBI" id="CHEBI:30616"/>
    </ligand>
</feature>
<keyword id="KW-0067">ATP-binding</keyword>
<keyword id="KW-0963">Cytoplasm</keyword>
<keyword id="KW-0418">Kinase</keyword>
<keyword id="KW-0460">Magnesium</keyword>
<keyword id="KW-0479">Metal-binding</keyword>
<keyword id="KW-0546">Nucleotide metabolism</keyword>
<keyword id="KW-0547">Nucleotide-binding</keyword>
<keyword id="KW-0597">Phosphoprotein</keyword>
<keyword id="KW-0808">Transferase</keyword>
<comment type="function">
    <text evidence="1">Major role in the synthesis of nucleoside triphosphates other than ATP. The ATP gamma phosphate is transferred to the NDP beta phosphate via a ping-pong mechanism, using a phosphorylated active-site intermediate.</text>
</comment>
<comment type="catalytic activity">
    <reaction evidence="1">
        <text>a 2'-deoxyribonucleoside 5'-diphosphate + ATP = a 2'-deoxyribonucleoside 5'-triphosphate + ADP</text>
        <dbReference type="Rhea" id="RHEA:44640"/>
        <dbReference type="ChEBI" id="CHEBI:30616"/>
        <dbReference type="ChEBI" id="CHEBI:61560"/>
        <dbReference type="ChEBI" id="CHEBI:73316"/>
        <dbReference type="ChEBI" id="CHEBI:456216"/>
        <dbReference type="EC" id="2.7.4.6"/>
    </reaction>
</comment>
<comment type="catalytic activity">
    <reaction evidence="1">
        <text>a ribonucleoside 5'-diphosphate + ATP = a ribonucleoside 5'-triphosphate + ADP</text>
        <dbReference type="Rhea" id="RHEA:18113"/>
        <dbReference type="ChEBI" id="CHEBI:30616"/>
        <dbReference type="ChEBI" id="CHEBI:57930"/>
        <dbReference type="ChEBI" id="CHEBI:61557"/>
        <dbReference type="ChEBI" id="CHEBI:456216"/>
        <dbReference type="EC" id="2.7.4.6"/>
    </reaction>
</comment>
<comment type="cofactor">
    <cofactor evidence="1">
        <name>Mg(2+)</name>
        <dbReference type="ChEBI" id="CHEBI:18420"/>
    </cofactor>
</comment>
<comment type="subunit">
    <text evidence="1">Homotetramer.</text>
</comment>
<comment type="subcellular location">
    <subcellularLocation>
        <location evidence="1">Cytoplasm</location>
    </subcellularLocation>
</comment>
<comment type="similarity">
    <text evidence="1">Belongs to the NDK family.</text>
</comment>
<sequence>MAIERTFSMIKPDATRRNLTGAIIAKLEEAGLRVVASKRVWMSRREAEGFYAVHKDRPFFGELVEFMSSGPTVVQVLEGENAIAKNREVMGATNPANADEGTIRKTFALSIGENSVHGSDAPETAAEEIAYWFSGTEIVG</sequence>
<accession>Q57E46</accession>
<evidence type="ECO:0000255" key="1">
    <source>
        <dbReference type="HAMAP-Rule" id="MF_00451"/>
    </source>
</evidence>
<proteinExistence type="inferred from homology"/>
<name>NDK_BRUAB</name>
<gene>
    <name evidence="1" type="primary">ndk</name>
    <name type="ordered locus">BruAb1_0713</name>
</gene>
<dbReference type="EC" id="2.7.4.6" evidence="1"/>
<dbReference type="EMBL" id="AE017223">
    <property type="protein sequence ID" value="AAX74088.1"/>
    <property type="molecule type" value="Genomic_DNA"/>
</dbReference>
<dbReference type="RefSeq" id="WP_002963836.1">
    <property type="nucleotide sequence ID" value="NC_006932.1"/>
</dbReference>
<dbReference type="SMR" id="Q57E46"/>
<dbReference type="EnsemblBacteria" id="AAX74088">
    <property type="protein sequence ID" value="AAX74088"/>
    <property type="gene ID" value="BruAb1_0713"/>
</dbReference>
<dbReference type="GeneID" id="97533983"/>
<dbReference type="KEGG" id="bmb:BruAb1_0713"/>
<dbReference type="HOGENOM" id="CLU_060216_8_1_5"/>
<dbReference type="Proteomes" id="UP000000540">
    <property type="component" value="Chromosome I"/>
</dbReference>
<dbReference type="GO" id="GO:0005737">
    <property type="term" value="C:cytoplasm"/>
    <property type="evidence" value="ECO:0007669"/>
    <property type="project" value="UniProtKB-SubCell"/>
</dbReference>
<dbReference type="GO" id="GO:0005524">
    <property type="term" value="F:ATP binding"/>
    <property type="evidence" value="ECO:0007669"/>
    <property type="project" value="UniProtKB-UniRule"/>
</dbReference>
<dbReference type="GO" id="GO:0046872">
    <property type="term" value="F:metal ion binding"/>
    <property type="evidence" value="ECO:0007669"/>
    <property type="project" value="UniProtKB-KW"/>
</dbReference>
<dbReference type="GO" id="GO:0004550">
    <property type="term" value="F:nucleoside diphosphate kinase activity"/>
    <property type="evidence" value="ECO:0007669"/>
    <property type="project" value="UniProtKB-UniRule"/>
</dbReference>
<dbReference type="GO" id="GO:0006241">
    <property type="term" value="P:CTP biosynthetic process"/>
    <property type="evidence" value="ECO:0007669"/>
    <property type="project" value="UniProtKB-UniRule"/>
</dbReference>
<dbReference type="GO" id="GO:0006183">
    <property type="term" value="P:GTP biosynthetic process"/>
    <property type="evidence" value="ECO:0007669"/>
    <property type="project" value="UniProtKB-UniRule"/>
</dbReference>
<dbReference type="GO" id="GO:0006228">
    <property type="term" value="P:UTP biosynthetic process"/>
    <property type="evidence" value="ECO:0007669"/>
    <property type="project" value="UniProtKB-UniRule"/>
</dbReference>
<dbReference type="CDD" id="cd04413">
    <property type="entry name" value="NDPk_I"/>
    <property type="match status" value="1"/>
</dbReference>
<dbReference type="FunFam" id="3.30.70.141:FF:000001">
    <property type="entry name" value="Nucleoside diphosphate kinase"/>
    <property type="match status" value="1"/>
</dbReference>
<dbReference type="Gene3D" id="3.30.70.141">
    <property type="entry name" value="Nucleoside diphosphate kinase-like domain"/>
    <property type="match status" value="1"/>
</dbReference>
<dbReference type="HAMAP" id="MF_00451">
    <property type="entry name" value="NDP_kinase"/>
    <property type="match status" value="1"/>
</dbReference>
<dbReference type="InterPro" id="IPR034907">
    <property type="entry name" value="NDK-like_dom"/>
</dbReference>
<dbReference type="InterPro" id="IPR036850">
    <property type="entry name" value="NDK-like_dom_sf"/>
</dbReference>
<dbReference type="InterPro" id="IPR001564">
    <property type="entry name" value="Nucleoside_diP_kinase"/>
</dbReference>
<dbReference type="InterPro" id="IPR023005">
    <property type="entry name" value="Nucleoside_diP_kinase_AS"/>
</dbReference>
<dbReference type="NCBIfam" id="NF001908">
    <property type="entry name" value="PRK00668.1"/>
    <property type="match status" value="1"/>
</dbReference>
<dbReference type="PANTHER" id="PTHR11349">
    <property type="entry name" value="NUCLEOSIDE DIPHOSPHATE KINASE"/>
    <property type="match status" value="1"/>
</dbReference>
<dbReference type="Pfam" id="PF00334">
    <property type="entry name" value="NDK"/>
    <property type="match status" value="1"/>
</dbReference>
<dbReference type="PRINTS" id="PR01243">
    <property type="entry name" value="NUCDPKINASE"/>
</dbReference>
<dbReference type="SMART" id="SM00562">
    <property type="entry name" value="NDK"/>
    <property type="match status" value="1"/>
</dbReference>
<dbReference type="SUPFAM" id="SSF54919">
    <property type="entry name" value="Nucleoside diphosphate kinase, NDK"/>
    <property type="match status" value="1"/>
</dbReference>
<dbReference type="PROSITE" id="PS00469">
    <property type="entry name" value="NDPK"/>
    <property type="match status" value="1"/>
</dbReference>
<dbReference type="PROSITE" id="PS51374">
    <property type="entry name" value="NDPK_LIKE"/>
    <property type="match status" value="1"/>
</dbReference>
<organism>
    <name type="scientific">Brucella abortus biovar 1 (strain 9-941)</name>
    <dbReference type="NCBI Taxonomy" id="262698"/>
    <lineage>
        <taxon>Bacteria</taxon>
        <taxon>Pseudomonadati</taxon>
        <taxon>Pseudomonadota</taxon>
        <taxon>Alphaproteobacteria</taxon>
        <taxon>Hyphomicrobiales</taxon>
        <taxon>Brucellaceae</taxon>
        <taxon>Brucella/Ochrobactrum group</taxon>
        <taxon>Brucella</taxon>
    </lineage>
</organism>
<protein>
    <recommendedName>
        <fullName evidence="1">Nucleoside diphosphate kinase</fullName>
        <shortName evidence="1">NDK</shortName>
        <shortName evidence="1">NDP kinase</shortName>
        <ecNumber evidence="1">2.7.4.6</ecNumber>
    </recommendedName>
    <alternativeName>
        <fullName evidence="1">Nucleoside-2-P kinase</fullName>
    </alternativeName>
</protein>
<reference key="1">
    <citation type="journal article" date="2005" name="J. Bacteriol.">
        <title>Completion of the genome sequence of Brucella abortus and comparison to the highly similar genomes of Brucella melitensis and Brucella suis.</title>
        <authorList>
            <person name="Halling S.M."/>
            <person name="Peterson-Burch B.D."/>
            <person name="Bricker B.J."/>
            <person name="Zuerner R.L."/>
            <person name="Qing Z."/>
            <person name="Li L.-L."/>
            <person name="Kapur V."/>
            <person name="Alt D.P."/>
            <person name="Olsen S.C."/>
        </authorList>
    </citation>
    <scope>NUCLEOTIDE SEQUENCE [LARGE SCALE GENOMIC DNA]</scope>
    <source>
        <strain>9-941</strain>
    </source>
</reference>